<reference key="1">
    <citation type="journal article" date="1996" name="Science">
        <title>Complete genome sequence of the methanogenic archaeon, Methanococcus jannaschii.</title>
        <authorList>
            <person name="Bult C.J."/>
            <person name="White O."/>
            <person name="Olsen G.J."/>
            <person name="Zhou L."/>
            <person name="Fleischmann R.D."/>
            <person name="Sutton G.G."/>
            <person name="Blake J.A."/>
            <person name="FitzGerald L.M."/>
            <person name="Clayton R.A."/>
            <person name="Gocayne J.D."/>
            <person name="Kerlavage A.R."/>
            <person name="Dougherty B.A."/>
            <person name="Tomb J.-F."/>
            <person name="Adams M.D."/>
            <person name="Reich C.I."/>
            <person name="Overbeek R."/>
            <person name="Kirkness E.F."/>
            <person name="Weinstock K.G."/>
            <person name="Merrick J.M."/>
            <person name="Glodek A."/>
            <person name="Scott J.L."/>
            <person name="Geoghagen N.S.M."/>
            <person name="Weidman J.F."/>
            <person name="Fuhrmann J.L."/>
            <person name="Nguyen D."/>
            <person name="Utterback T.R."/>
            <person name="Kelley J.M."/>
            <person name="Peterson J.D."/>
            <person name="Sadow P.W."/>
            <person name="Hanna M.C."/>
            <person name="Cotton M.D."/>
            <person name="Roberts K.M."/>
            <person name="Hurst M.A."/>
            <person name="Kaine B.P."/>
            <person name="Borodovsky M."/>
            <person name="Klenk H.-P."/>
            <person name="Fraser C.M."/>
            <person name="Smith H.O."/>
            <person name="Woese C.R."/>
            <person name="Venter J.C."/>
        </authorList>
    </citation>
    <scope>NUCLEOTIDE SEQUENCE [LARGE SCALE GENOMIC DNA]</scope>
    <source>
        <strain>ATCC 43067 / DSM 2661 / JAL-1 / JCM 10045 / NBRC 100440</strain>
    </source>
</reference>
<feature type="chain" id="PRO_0000106738" description="Uncharacterized protein MJ0201">
    <location>
        <begin position="1"/>
        <end position="160"/>
    </location>
</feature>
<keyword id="KW-1185">Reference proteome</keyword>
<dbReference type="EMBL" id="L77117">
    <property type="protein sequence ID" value="AAB98185.1"/>
    <property type="molecule type" value="Genomic_DNA"/>
</dbReference>
<dbReference type="PIR" id="B64325">
    <property type="entry name" value="B64325"/>
</dbReference>
<dbReference type="RefSeq" id="WP_010869696.1">
    <property type="nucleotide sequence ID" value="NC_000909.1"/>
</dbReference>
<dbReference type="FunCoup" id="Q57654">
    <property type="interactions" value="1"/>
</dbReference>
<dbReference type="STRING" id="243232.MJ_0201"/>
<dbReference type="PaxDb" id="243232-MJ_0201"/>
<dbReference type="DNASU" id="1451050"/>
<dbReference type="EnsemblBacteria" id="AAB98185">
    <property type="protein sequence ID" value="AAB98185"/>
    <property type="gene ID" value="MJ_0201"/>
</dbReference>
<dbReference type="GeneID" id="1451050"/>
<dbReference type="KEGG" id="mja:MJ_0201"/>
<dbReference type="eggNOG" id="arCOG03118">
    <property type="taxonomic scope" value="Archaea"/>
</dbReference>
<dbReference type="HOGENOM" id="CLU_098634_2_0_2"/>
<dbReference type="InParanoid" id="Q57654"/>
<dbReference type="OrthoDB" id="59749at2157"/>
<dbReference type="PhylomeDB" id="Q57654"/>
<dbReference type="Proteomes" id="UP000000805">
    <property type="component" value="Chromosome"/>
</dbReference>
<dbReference type="InterPro" id="IPR051311">
    <property type="entry name" value="DedA_domain"/>
</dbReference>
<dbReference type="InterPro" id="IPR032816">
    <property type="entry name" value="VTT_dom"/>
</dbReference>
<dbReference type="PANTHER" id="PTHR42709">
    <property type="entry name" value="ALKALINE PHOSPHATASE LIKE PROTEIN"/>
    <property type="match status" value="1"/>
</dbReference>
<dbReference type="PANTHER" id="PTHR42709:SF4">
    <property type="entry name" value="INNER MEMBRANE PROTEIN YQAA"/>
    <property type="match status" value="1"/>
</dbReference>
<dbReference type="Pfam" id="PF09335">
    <property type="entry name" value="VTT_dom"/>
    <property type="match status" value="1"/>
</dbReference>
<name>Y201_METJA</name>
<proteinExistence type="predicted"/>
<organism>
    <name type="scientific">Methanocaldococcus jannaschii (strain ATCC 43067 / DSM 2661 / JAL-1 / JCM 10045 / NBRC 100440)</name>
    <name type="common">Methanococcus jannaschii</name>
    <dbReference type="NCBI Taxonomy" id="243232"/>
    <lineage>
        <taxon>Archaea</taxon>
        <taxon>Methanobacteriati</taxon>
        <taxon>Methanobacteriota</taxon>
        <taxon>Methanomada group</taxon>
        <taxon>Methanococci</taxon>
        <taxon>Methanococcales</taxon>
        <taxon>Methanocaldococcaceae</taxon>
        <taxon>Methanocaldococcus</taxon>
    </lineage>
</organism>
<sequence>MINLELFKEFLLNLIKDYGYFGIFLVGFSEPIFQPFPTEIFIIAGILLGLDWKLVWLISTIACNFGAVVTYYLAKKYGEKLMLKLFDEEKIKKGSHYLKKWGILGVIIASFTPIPFEVICWVCGSFEMPFERYMIAVFLSRLIRHGMVILPFVLKDHIHF</sequence>
<gene>
    <name type="ordered locus">MJ0201</name>
</gene>
<protein>
    <recommendedName>
        <fullName>Uncharacterized protein MJ0201</fullName>
    </recommendedName>
</protein>
<accession>Q57654</accession>